<gene>
    <name evidence="1" type="primary">rpmA</name>
    <name type="ordered locus">msl4017</name>
</gene>
<reference key="1">
    <citation type="journal article" date="2000" name="DNA Res.">
        <title>Complete genome structure of the nitrogen-fixing symbiotic bacterium Mesorhizobium loti.</title>
        <authorList>
            <person name="Kaneko T."/>
            <person name="Nakamura Y."/>
            <person name="Sato S."/>
            <person name="Asamizu E."/>
            <person name="Kato T."/>
            <person name="Sasamoto S."/>
            <person name="Watanabe A."/>
            <person name="Idesawa K."/>
            <person name="Ishikawa A."/>
            <person name="Kawashima K."/>
            <person name="Kimura T."/>
            <person name="Kishida Y."/>
            <person name="Kiyokawa C."/>
            <person name="Kohara M."/>
            <person name="Matsumoto M."/>
            <person name="Matsuno A."/>
            <person name="Mochizuki Y."/>
            <person name="Nakayama S."/>
            <person name="Nakazaki N."/>
            <person name="Shimpo S."/>
            <person name="Sugimoto M."/>
            <person name="Takeuchi C."/>
            <person name="Yamada M."/>
            <person name="Tabata S."/>
        </authorList>
    </citation>
    <scope>NUCLEOTIDE SEQUENCE [LARGE SCALE GENOMIC DNA]</scope>
    <source>
        <strain>LMG 29417 / CECT 9101 / MAFF 303099</strain>
    </source>
</reference>
<feature type="chain" id="PRO_0000181151" description="Large ribosomal subunit protein bL27">
    <location>
        <begin position="1"/>
        <end position="89"/>
    </location>
</feature>
<feature type="region of interest" description="Disordered" evidence="2">
    <location>
        <begin position="1"/>
        <end position="23"/>
    </location>
</feature>
<proteinExistence type="inferred from homology"/>
<protein>
    <recommendedName>
        <fullName evidence="1">Large ribosomal subunit protein bL27</fullName>
    </recommendedName>
    <alternativeName>
        <fullName evidence="3">50S ribosomal protein L27</fullName>
    </alternativeName>
</protein>
<dbReference type="EMBL" id="BA000012">
    <property type="protein sequence ID" value="BAB50777.1"/>
    <property type="molecule type" value="Genomic_DNA"/>
</dbReference>
<dbReference type="RefSeq" id="WP_010912120.1">
    <property type="nucleotide sequence ID" value="NC_002678.2"/>
</dbReference>
<dbReference type="SMR" id="Q98EZ0"/>
<dbReference type="GeneID" id="66681441"/>
<dbReference type="KEGG" id="mlo:msl4017"/>
<dbReference type="eggNOG" id="COG0211">
    <property type="taxonomic scope" value="Bacteria"/>
</dbReference>
<dbReference type="HOGENOM" id="CLU_095424_4_1_5"/>
<dbReference type="Proteomes" id="UP000000552">
    <property type="component" value="Chromosome"/>
</dbReference>
<dbReference type="GO" id="GO:0022625">
    <property type="term" value="C:cytosolic large ribosomal subunit"/>
    <property type="evidence" value="ECO:0007669"/>
    <property type="project" value="TreeGrafter"/>
</dbReference>
<dbReference type="GO" id="GO:0003735">
    <property type="term" value="F:structural constituent of ribosome"/>
    <property type="evidence" value="ECO:0007669"/>
    <property type="project" value="InterPro"/>
</dbReference>
<dbReference type="GO" id="GO:0006412">
    <property type="term" value="P:translation"/>
    <property type="evidence" value="ECO:0007669"/>
    <property type="project" value="UniProtKB-UniRule"/>
</dbReference>
<dbReference type="FunFam" id="2.40.50.100:FF:000020">
    <property type="entry name" value="50S ribosomal protein L27"/>
    <property type="match status" value="1"/>
</dbReference>
<dbReference type="Gene3D" id="2.40.50.100">
    <property type="match status" value="1"/>
</dbReference>
<dbReference type="HAMAP" id="MF_00539">
    <property type="entry name" value="Ribosomal_bL27"/>
    <property type="match status" value="1"/>
</dbReference>
<dbReference type="InterPro" id="IPR001684">
    <property type="entry name" value="Ribosomal_bL27"/>
</dbReference>
<dbReference type="InterPro" id="IPR018261">
    <property type="entry name" value="Ribosomal_bL27_CS"/>
</dbReference>
<dbReference type="NCBIfam" id="TIGR00062">
    <property type="entry name" value="L27"/>
    <property type="match status" value="1"/>
</dbReference>
<dbReference type="PANTHER" id="PTHR15893:SF0">
    <property type="entry name" value="LARGE RIBOSOMAL SUBUNIT PROTEIN BL27M"/>
    <property type="match status" value="1"/>
</dbReference>
<dbReference type="PANTHER" id="PTHR15893">
    <property type="entry name" value="RIBOSOMAL PROTEIN L27"/>
    <property type="match status" value="1"/>
</dbReference>
<dbReference type="Pfam" id="PF01016">
    <property type="entry name" value="Ribosomal_L27"/>
    <property type="match status" value="1"/>
</dbReference>
<dbReference type="PRINTS" id="PR00063">
    <property type="entry name" value="RIBOSOMALL27"/>
</dbReference>
<dbReference type="SUPFAM" id="SSF110324">
    <property type="entry name" value="Ribosomal L27 protein-like"/>
    <property type="match status" value="1"/>
</dbReference>
<dbReference type="PROSITE" id="PS00831">
    <property type="entry name" value="RIBOSOMAL_L27"/>
    <property type="match status" value="1"/>
</dbReference>
<evidence type="ECO:0000255" key="1">
    <source>
        <dbReference type="HAMAP-Rule" id="MF_00539"/>
    </source>
</evidence>
<evidence type="ECO:0000256" key="2">
    <source>
        <dbReference type="SAM" id="MobiDB-lite"/>
    </source>
</evidence>
<evidence type="ECO:0000305" key="3"/>
<sequence>MAHKKAGGSSRNGRDSHSKRLGVKKFGGEAVIPGNIIIRQRGTTWHPGVNVGMGTDHTLFALESGAVTFNKKANGRTYVSVNPITKAAE</sequence>
<accession>Q98EZ0</accession>
<organism>
    <name type="scientific">Mesorhizobium japonicum (strain LMG 29417 / CECT 9101 / MAFF 303099)</name>
    <name type="common">Mesorhizobium loti (strain MAFF 303099)</name>
    <dbReference type="NCBI Taxonomy" id="266835"/>
    <lineage>
        <taxon>Bacteria</taxon>
        <taxon>Pseudomonadati</taxon>
        <taxon>Pseudomonadota</taxon>
        <taxon>Alphaproteobacteria</taxon>
        <taxon>Hyphomicrobiales</taxon>
        <taxon>Phyllobacteriaceae</taxon>
        <taxon>Mesorhizobium</taxon>
    </lineage>
</organism>
<keyword id="KW-0687">Ribonucleoprotein</keyword>
<keyword id="KW-0689">Ribosomal protein</keyword>
<name>RL27_RHILO</name>
<comment type="similarity">
    <text evidence="1">Belongs to the bacterial ribosomal protein bL27 family.</text>
</comment>